<name>REX_CLOBH</name>
<sequence length="210" mass="23754">MDKKKNISMAVIRRLPKYHRYLYELLKNDVDRISSKELSEKIGFTASQIRQDLNCFGDFGQQGYGYNVSELHHQISNILGLNNPYNIIIIGAGNIGQALANYTRFSKLGFNVKAMFDTNPKLIGLKIREIEILDIDYLSSYLEKNNIDIGIICVPHDNAQKVANILVKNDIKGIWNFAPIDLSVPEDVVVENVHLSDSLLTLTCLINKTE</sequence>
<reference key="1">
    <citation type="journal article" date="2007" name="Genome Res.">
        <title>Genome sequence of a proteolytic (Group I) Clostridium botulinum strain Hall A and comparative analysis of the clostridial genomes.</title>
        <authorList>
            <person name="Sebaihia M."/>
            <person name="Peck M.W."/>
            <person name="Minton N.P."/>
            <person name="Thomson N.R."/>
            <person name="Holden M.T.G."/>
            <person name="Mitchell W.J."/>
            <person name="Carter A.T."/>
            <person name="Bentley S.D."/>
            <person name="Mason D.R."/>
            <person name="Crossman L."/>
            <person name="Paul C.J."/>
            <person name="Ivens A."/>
            <person name="Wells-Bennik M.H.J."/>
            <person name="Davis I.J."/>
            <person name="Cerdeno-Tarraga A.M."/>
            <person name="Churcher C."/>
            <person name="Quail M.A."/>
            <person name="Chillingworth T."/>
            <person name="Feltwell T."/>
            <person name="Fraser A."/>
            <person name="Goodhead I."/>
            <person name="Hance Z."/>
            <person name="Jagels K."/>
            <person name="Larke N."/>
            <person name="Maddison M."/>
            <person name="Moule S."/>
            <person name="Mungall K."/>
            <person name="Norbertczak H."/>
            <person name="Rabbinowitsch E."/>
            <person name="Sanders M."/>
            <person name="Simmonds M."/>
            <person name="White B."/>
            <person name="Whithead S."/>
            <person name="Parkhill J."/>
        </authorList>
    </citation>
    <scope>NUCLEOTIDE SEQUENCE [LARGE SCALE GENOMIC DNA]</scope>
    <source>
        <strain>Hall / ATCC 3502 / NCTC 13319 / Type A</strain>
    </source>
</reference>
<reference key="2">
    <citation type="journal article" date="2007" name="PLoS ONE">
        <title>Analysis of the neurotoxin complex genes in Clostridium botulinum A1-A4 and B1 strains: BoNT/A3, /Ba4 and /B1 clusters are located within plasmids.</title>
        <authorList>
            <person name="Smith T.J."/>
            <person name="Hill K.K."/>
            <person name="Foley B.T."/>
            <person name="Detter J.C."/>
            <person name="Munk A.C."/>
            <person name="Bruce D.C."/>
            <person name="Doggett N.A."/>
            <person name="Smith L.A."/>
            <person name="Marks J.D."/>
            <person name="Xie G."/>
            <person name="Brettin T.S."/>
        </authorList>
    </citation>
    <scope>NUCLEOTIDE SEQUENCE [LARGE SCALE GENOMIC DNA]</scope>
    <source>
        <strain>Hall / ATCC 3502 / NCTC 13319 / Type A</strain>
    </source>
</reference>
<protein>
    <recommendedName>
        <fullName evidence="1">Redox-sensing transcriptional repressor Rex</fullName>
    </recommendedName>
</protein>
<feature type="chain" id="PRO_1000065394" description="Redox-sensing transcriptional repressor Rex">
    <location>
        <begin position="1"/>
        <end position="210"/>
    </location>
</feature>
<feature type="DNA-binding region" description="H-T-H motif" evidence="1">
    <location>
        <begin position="17"/>
        <end position="56"/>
    </location>
</feature>
<feature type="binding site" evidence="1">
    <location>
        <begin position="91"/>
        <end position="96"/>
    </location>
    <ligand>
        <name>NAD(+)</name>
        <dbReference type="ChEBI" id="CHEBI:57540"/>
    </ligand>
</feature>
<dbReference type="EMBL" id="CP000727">
    <property type="protein sequence ID" value="ABS38268.1"/>
    <property type="molecule type" value="Genomic_DNA"/>
</dbReference>
<dbReference type="EMBL" id="AM412317">
    <property type="protein sequence ID" value="CAL84864.1"/>
    <property type="molecule type" value="Genomic_DNA"/>
</dbReference>
<dbReference type="RefSeq" id="WP_003357537.1">
    <property type="nucleotide sequence ID" value="NC_009698.1"/>
</dbReference>
<dbReference type="RefSeq" id="YP_001255790.1">
    <property type="nucleotide sequence ID" value="NC_009495.1"/>
</dbReference>
<dbReference type="RefSeq" id="YP_001389030.1">
    <property type="nucleotide sequence ID" value="NC_009698.1"/>
</dbReference>
<dbReference type="SMR" id="A5I731"/>
<dbReference type="KEGG" id="cbh:CLC_3248"/>
<dbReference type="KEGG" id="cbo:CBO3306"/>
<dbReference type="PATRIC" id="fig|413999.7.peg.3282"/>
<dbReference type="HOGENOM" id="CLU_061534_1_0_9"/>
<dbReference type="PRO" id="PR:A5I731"/>
<dbReference type="Proteomes" id="UP000001986">
    <property type="component" value="Chromosome"/>
</dbReference>
<dbReference type="GO" id="GO:0005737">
    <property type="term" value="C:cytoplasm"/>
    <property type="evidence" value="ECO:0007669"/>
    <property type="project" value="UniProtKB-SubCell"/>
</dbReference>
<dbReference type="GO" id="GO:0003677">
    <property type="term" value="F:DNA binding"/>
    <property type="evidence" value="ECO:0007669"/>
    <property type="project" value="UniProtKB-UniRule"/>
</dbReference>
<dbReference type="GO" id="GO:0003700">
    <property type="term" value="F:DNA-binding transcription factor activity"/>
    <property type="evidence" value="ECO:0007669"/>
    <property type="project" value="UniProtKB-UniRule"/>
</dbReference>
<dbReference type="GO" id="GO:0045892">
    <property type="term" value="P:negative regulation of DNA-templated transcription"/>
    <property type="evidence" value="ECO:0007669"/>
    <property type="project" value="InterPro"/>
</dbReference>
<dbReference type="GO" id="GO:0051775">
    <property type="term" value="P:response to redox state"/>
    <property type="evidence" value="ECO:0007669"/>
    <property type="project" value="InterPro"/>
</dbReference>
<dbReference type="Gene3D" id="3.40.50.720">
    <property type="entry name" value="NAD(P)-binding Rossmann-like Domain"/>
    <property type="match status" value="1"/>
</dbReference>
<dbReference type="Gene3D" id="1.10.10.10">
    <property type="entry name" value="Winged helix-like DNA-binding domain superfamily/Winged helix DNA-binding domain"/>
    <property type="match status" value="1"/>
</dbReference>
<dbReference type="HAMAP" id="MF_01131">
    <property type="entry name" value="Rex"/>
    <property type="match status" value="1"/>
</dbReference>
<dbReference type="InterPro" id="IPR003781">
    <property type="entry name" value="CoA-bd"/>
</dbReference>
<dbReference type="InterPro" id="IPR036291">
    <property type="entry name" value="NAD(P)-bd_dom_sf"/>
</dbReference>
<dbReference type="InterPro" id="IPR009718">
    <property type="entry name" value="Rex_DNA-bd_C_dom"/>
</dbReference>
<dbReference type="InterPro" id="IPR022876">
    <property type="entry name" value="Tscrpt_rep_Rex"/>
</dbReference>
<dbReference type="InterPro" id="IPR036388">
    <property type="entry name" value="WH-like_DNA-bd_sf"/>
</dbReference>
<dbReference type="InterPro" id="IPR036390">
    <property type="entry name" value="WH_DNA-bd_sf"/>
</dbReference>
<dbReference type="NCBIfam" id="NF003989">
    <property type="entry name" value="PRK05472.1-3"/>
    <property type="match status" value="1"/>
</dbReference>
<dbReference type="NCBIfam" id="NF003990">
    <property type="entry name" value="PRK05472.1-4"/>
    <property type="match status" value="1"/>
</dbReference>
<dbReference type="NCBIfam" id="NF003993">
    <property type="entry name" value="PRK05472.2-2"/>
    <property type="match status" value="1"/>
</dbReference>
<dbReference type="NCBIfam" id="NF003994">
    <property type="entry name" value="PRK05472.2-3"/>
    <property type="match status" value="1"/>
</dbReference>
<dbReference type="NCBIfam" id="NF003995">
    <property type="entry name" value="PRK05472.2-4"/>
    <property type="match status" value="1"/>
</dbReference>
<dbReference type="NCBIfam" id="NF003996">
    <property type="entry name" value="PRK05472.2-5"/>
    <property type="match status" value="1"/>
</dbReference>
<dbReference type="PANTHER" id="PTHR35786">
    <property type="entry name" value="REDOX-SENSING TRANSCRIPTIONAL REPRESSOR REX"/>
    <property type="match status" value="1"/>
</dbReference>
<dbReference type="PANTHER" id="PTHR35786:SF1">
    <property type="entry name" value="REDOX-SENSING TRANSCRIPTIONAL REPRESSOR REX 1"/>
    <property type="match status" value="1"/>
</dbReference>
<dbReference type="Pfam" id="PF02629">
    <property type="entry name" value="CoA_binding"/>
    <property type="match status" value="1"/>
</dbReference>
<dbReference type="Pfam" id="PF06971">
    <property type="entry name" value="Put_DNA-bind_N"/>
    <property type="match status" value="1"/>
</dbReference>
<dbReference type="SMART" id="SM00881">
    <property type="entry name" value="CoA_binding"/>
    <property type="match status" value="1"/>
</dbReference>
<dbReference type="SUPFAM" id="SSF51735">
    <property type="entry name" value="NAD(P)-binding Rossmann-fold domains"/>
    <property type="match status" value="1"/>
</dbReference>
<dbReference type="SUPFAM" id="SSF46785">
    <property type="entry name" value="Winged helix' DNA-binding domain"/>
    <property type="match status" value="1"/>
</dbReference>
<evidence type="ECO:0000255" key="1">
    <source>
        <dbReference type="HAMAP-Rule" id="MF_01131"/>
    </source>
</evidence>
<comment type="function">
    <text evidence="1">Modulates transcription in response to changes in cellular NADH/NAD(+) redox state.</text>
</comment>
<comment type="subunit">
    <text evidence="1">Homodimer.</text>
</comment>
<comment type="subcellular location">
    <subcellularLocation>
        <location evidence="1">Cytoplasm</location>
    </subcellularLocation>
</comment>
<comment type="similarity">
    <text evidence="1">Belongs to the transcriptional regulatory Rex family.</text>
</comment>
<organism>
    <name type="scientific">Clostridium botulinum (strain Hall / ATCC 3502 / NCTC 13319 / Type A)</name>
    <dbReference type="NCBI Taxonomy" id="441771"/>
    <lineage>
        <taxon>Bacteria</taxon>
        <taxon>Bacillati</taxon>
        <taxon>Bacillota</taxon>
        <taxon>Clostridia</taxon>
        <taxon>Eubacteriales</taxon>
        <taxon>Clostridiaceae</taxon>
        <taxon>Clostridium</taxon>
    </lineage>
</organism>
<keyword id="KW-0963">Cytoplasm</keyword>
<keyword id="KW-0238">DNA-binding</keyword>
<keyword id="KW-0520">NAD</keyword>
<keyword id="KW-1185">Reference proteome</keyword>
<keyword id="KW-0678">Repressor</keyword>
<keyword id="KW-0804">Transcription</keyword>
<keyword id="KW-0805">Transcription regulation</keyword>
<proteinExistence type="inferred from homology"/>
<gene>
    <name evidence="1" type="primary">rex</name>
    <name type="ordered locus">CBO3306</name>
    <name type="ordered locus">CLC_3248</name>
</gene>
<accession>A5I731</accession>
<accession>A7G8B5</accession>